<reference key="1">
    <citation type="journal article" date="2004" name="Genomics">
        <title>PLET1 (C11orf34), a highly expressed and processed novel gene in pig and mouse placenta, is transcribed but poorly spliced in human.</title>
        <authorList>
            <person name="Zhao S.-H."/>
            <person name="Simmons D.G."/>
            <person name="Cross J.C."/>
            <person name="Scheetz T.E."/>
            <person name="Casavant T.L."/>
            <person name="Soares M.B."/>
            <person name="Tuggle C.K."/>
        </authorList>
    </citation>
    <scope>NUCLEOTIDE SEQUENCE [MRNA] (ISOFORM 1)</scope>
    <scope>TISSUE SPECIFICITY</scope>
    <source>
        <strain>FVB/NJ</strain>
    </source>
</reference>
<reference key="2">
    <citation type="journal article" date="2005" name="Science">
        <title>The transcriptional landscape of the mammalian genome.</title>
        <authorList>
            <person name="Carninci P."/>
            <person name="Kasukawa T."/>
            <person name="Katayama S."/>
            <person name="Gough J."/>
            <person name="Frith M.C."/>
            <person name="Maeda N."/>
            <person name="Oyama R."/>
            <person name="Ravasi T."/>
            <person name="Lenhard B."/>
            <person name="Wells C."/>
            <person name="Kodzius R."/>
            <person name="Shimokawa K."/>
            <person name="Bajic V.B."/>
            <person name="Brenner S.E."/>
            <person name="Batalov S."/>
            <person name="Forrest A.R."/>
            <person name="Zavolan M."/>
            <person name="Davis M.J."/>
            <person name="Wilming L.G."/>
            <person name="Aidinis V."/>
            <person name="Allen J.E."/>
            <person name="Ambesi-Impiombato A."/>
            <person name="Apweiler R."/>
            <person name="Aturaliya R.N."/>
            <person name="Bailey T.L."/>
            <person name="Bansal M."/>
            <person name="Baxter L."/>
            <person name="Beisel K.W."/>
            <person name="Bersano T."/>
            <person name="Bono H."/>
            <person name="Chalk A.M."/>
            <person name="Chiu K.P."/>
            <person name="Choudhary V."/>
            <person name="Christoffels A."/>
            <person name="Clutterbuck D.R."/>
            <person name="Crowe M.L."/>
            <person name="Dalla E."/>
            <person name="Dalrymple B.P."/>
            <person name="de Bono B."/>
            <person name="Della Gatta G."/>
            <person name="di Bernardo D."/>
            <person name="Down T."/>
            <person name="Engstrom P."/>
            <person name="Fagiolini M."/>
            <person name="Faulkner G."/>
            <person name="Fletcher C.F."/>
            <person name="Fukushima T."/>
            <person name="Furuno M."/>
            <person name="Futaki S."/>
            <person name="Gariboldi M."/>
            <person name="Georgii-Hemming P."/>
            <person name="Gingeras T.R."/>
            <person name="Gojobori T."/>
            <person name="Green R.E."/>
            <person name="Gustincich S."/>
            <person name="Harbers M."/>
            <person name="Hayashi Y."/>
            <person name="Hensch T.K."/>
            <person name="Hirokawa N."/>
            <person name="Hill D."/>
            <person name="Huminiecki L."/>
            <person name="Iacono M."/>
            <person name="Ikeo K."/>
            <person name="Iwama A."/>
            <person name="Ishikawa T."/>
            <person name="Jakt M."/>
            <person name="Kanapin A."/>
            <person name="Katoh M."/>
            <person name="Kawasawa Y."/>
            <person name="Kelso J."/>
            <person name="Kitamura H."/>
            <person name="Kitano H."/>
            <person name="Kollias G."/>
            <person name="Krishnan S.P."/>
            <person name="Kruger A."/>
            <person name="Kummerfeld S.K."/>
            <person name="Kurochkin I.V."/>
            <person name="Lareau L.F."/>
            <person name="Lazarevic D."/>
            <person name="Lipovich L."/>
            <person name="Liu J."/>
            <person name="Liuni S."/>
            <person name="McWilliam S."/>
            <person name="Madan Babu M."/>
            <person name="Madera M."/>
            <person name="Marchionni L."/>
            <person name="Matsuda H."/>
            <person name="Matsuzawa S."/>
            <person name="Miki H."/>
            <person name="Mignone F."/>
            <person name="Miyake S."/>
            <person name="Morris K."/>
            <person name="Mottagui-Tabar S."/>
            <person name="Mulder N."/>
            <person name="Nakano N."/>
            <person name="Nakauchi H."/>
            <person name="Ng P."/>
            <person name="Nilsson R."/>
            <person name="Nishiguchi S."/>
            <person name="Nishikawa S."/>
            <person name="Nori F."/>
            <person name="Ohara O."/>
            <person name="Okazaki Y."/>
            <person name="Orlando V."/>
            <person name="Pang K.C."/>
            <person name="Pavan W.J."/>
            <person name="Pavesi G."/>
            <person name="Pesole G."/>
            <person name="Petrovsky N."/>
            <person name="Piazza S."/>
            <person name="Reed J."/>
            <person name="Reid J.F."/>
            <person name="Ring B.Z."/>
            <person name="Ringwald M."/>
            <person name="Rost B."/>
            <person name="Ruan Y."/>
            <person name="Salzberg S.L."/>
            <person name="Sandelin A."/>
            <person name="Schneider C."/>
            <person name="Schoenbach C."/>
            <person name="Sekiguchi K."/>
            <person name="Semple C.A."/>
            <person name="Seno S."/>
            <person name="Sessa L."/>
            <person name="Sheng Y."/>
            <person name="Shibata Y."/>
            <person name="Shimada H."/>
            <person name="Shimada K."/>
            <person name="Silva D."/>
            <person name="Sinclair B."/>
            <person name="Sperling S."/>
            <person name="Stupka E."/>
            <person name="Sugiura K."/>
            <person name="Sultana R."/>
            <person name="Takenaka Y."/>
            <person name="Taki K."/>
            <person name="Tammoja K."/>
            <person name="Tan S.L."/>
            <person name="Tang S."/>
            <person name="Taylor M.S."/>
            <person name="Tegner J."/>
            <person name="Teichmann S.A."/>
            <person name="Ueda H.R."/>
            <person name="van Nimwegen E."/>
            <person name="Verardo R."/>
            <person name="Wei C.L."/>
            <person name="Yagi K."/>
            <person name="Yamanishi H."/>
            <person name="Zabarovsky E."/>
            <person name="Zhu S."/>
            <person name="Zimmer A."/>
            <person name="Hide W."/>
            <person name="Bult C."/>
            <person name="Grimmond S.M."/>
            <person name="Teasdale R.D."/>
            <person name="Liu E.T."/>
            <person name="Brusic V."/>
            <person name="Quackenbush J."/>
            <person name="Wahlestedt C."/>
            <person name="Mattick J.S."/>
            <person name="Hume D.A."/>
            <person name="Kai C."/>
            <person name="Sasaki D."/>
            <person name="Tomaru Y."/>
            <person name="Fukuda S."/>
            <person name="Kanamori-Katayama M."/>
            <person name="Suzuki M."/>
            <person name="Aoki J."/>
            <person name="Arakawa T."/>
            <person name="Iida J."/>
            <person name="Imamura K."/>
            <person name="Itoh M."/>
            <person name="Kato T."/>
            <person name="Kawaji H."/>
            <person name="Kawagashira N."/>
            <person name="Kawashima T."/>
            <person name="Kojima M."/>
            <person name="Kondo S."/>
            <person name="Konno H."/>
            <person name="Nakano K."/>
            <person name="Ninomiya N."/>
            <person name="Nishio T."/>
            <person name="Okada M."/>
            <person name="Plessy C."/>
            <person name="Shibata K."/>
            <person name="Shiraki T."/>
            <person name="Suzuki S."/>
            <person name="Tagami M."/>
            <person name="Waki K."/>
            <person name="Watahiki A."/>
            <person name="Okamura-Oho Y."/>
            <person name="Suzuki H."/>
            <person name="Kawai J."/>
            <person name="Hayashizaki Y."/>
        </authorList>
    </citation>
    <scope>NUCLEOTIDE SEQUENCE [LARGE SCALE MRNA] (ISOFORMS 1 AND 2)</scope>
    <source>
        <strain>C57BL/6J</strain>
        <tissue>Kidney</tissue>
        <tissue>Placenta</tissue>
    </source>
</reference>
<reference key="3">
    <citation type="journal article" date="2004" name="Genome Res.">
        <title>The status, quality, and expansion of the NIH full-length cDNA project: the Mammalian Gene Collection (MGC).</title>
        <authorList>
            <consortium name="The MGC Project Team"/>
        </authorList>
    </citation>
    <scope>NUCLEOTIDE SEQUENCE [LARGE SCALE MRNA] (ISOFORM 1)</scope>
    <source>
        <strain>FVB/N</strain>
        <tissue>Mammary tumor</tissue>
    </source>
</reference>
<reference key="4">
    <citation type="journal article" date="2005" name="Zool. Sci.">
        <title>Distribution of a novel protein AgK114 expression in the normal tissues of adult mice: dual expression of AgK114 and growth hormone in anterior pituitary cells.</title>
        <authorList>
            <person name="Takeuchi M."/>
            <person name="Tatefuji T."/>
            <person name="Kayano T."/>
            <person name="Okura T."/>
            <person name="Mori T."/>
            <person name="Ohta T."/>
            <person name="Kurimoto M."/>
        </authorList>
    </citation>
    <scope>TISSUE SPECIFICITY</scope>
</reference>
<reference key="5">
    <citation type="journal article" date="2006" name="Biol. Pharm. Bull.">
        <title>The effect of AgK114 on wound healing.</title>
        <authorList>
            <person name="Tatefuji T."/>
            <person name="Arai C."/>
            <person name="Mori T."/>
            <person name="Okuda Y."/>
            <person name="Kayano T."/>
            <person name="Mizote A."/>
            <person name="Okura T."/>
            <person name="Takeuchi M."/>
            <person name="Ohta T."/>
            <person name="Kurimoto M."/>
        </authorList>
    </citation>
    <scope>POSSIBLE FUNCTION</scope>
</reference>
<reference key="6">
    <citation type="journal article" date="2007" name="BMC Dev. Biol.">
        <title>Novel gene expression patterns along the proximo-distal axis of the mouse embryo before gastrulation.</title>
        <authorList>
            <person name="Frankenberg S."/>
            <person name="Smith L."/>
            <person name="Greenfield A."/>
            <person name="Zernicka-Goetz M."/>
        </authorList>
    </citation>
    <scope>DEVELOPMENTAL STAGE</scope>
</reference>
<reference key="7">
    <citation type="journal article" date="2008" name="Proc. Natl. Acad. Sci. U.S.A.">
        <title>Identification of Plet-1 as a specific marker of early thymic epithelial progenitor cells.</title>
        <authorList>
            <person name="Depreter M.G.L."/>
            <person name="Blair N.F."/>
            <person name="Gaskell T.L."/>
            <person name="Nowell C.S."/>
            <person name="Davern K."/>
            <person name="Pagliocca A."/>
            <person name="Stenhouse F.H."/>
            <person name="Farley A.M."/>
            <person name="Fraser A."/>
            <person name="Vrana J."/>
            <person name="Robertson K."/>
            <person name="Morahan G."/>
            <person name="Tomlinson S.R."/>
            <person name="Blackburn C.C."/>
        </authorList>
    </citation>
    <scope>TISSUE SPECIFICITY</scope>
    <scope>DEVELOPMENTAL STAGE</scope>
</reference>
<reference key="8">
    <citation type="journal article" date="2010" name="J. Invest. Dermatol.">
        <title>Expression of the orphan protein Plet-1 during trichilemmal differentiation of anagen hair follicles.</title>
        <authorList>
            <person name="Raymond K."/>
            <person name="Richter A."/>
            <person name="Kreft M."/>
            <person name="Frijns E."/>
            <person name="Janssen H."/>
            <person name="Slijper M."/>
            <person name="Praetzel-Wunder S."/>
            <person name="Langbein L."/>
            <person name="Sonnenberg A."/>
        </authorList>
    </citation>
    <scope>FUNCTION</scope>
    <scope>SUBCELLULAR LOCATION</scope>
    <scope>GLYCOSYLATION</scope>
    <scope>GPI-ANCHOR</scope>
    <scope>TISSUE SPECIFICITY</scope>
    <scope>INDUCTION</scope>
</reference>
<feature type="signal peptide" evidence="1">
    <location>
        <begin position="1"/>
        <end position="27"/>
    </location>
</feature>
<feature type="chain" id="PRO_0000320954" description="Placenta-expressed transcript 1 protein">
    <location>
        <begin position="28"/>
        <end position="218"/>
    </location>
</feature>
<feature type="propeptide" id="PRO_0000424669" description="Removed in mature form" evidence="1">
    <location>
        <begin position="219"/>
        <end position="237"/>
    </location>
</feature>
<feature type="region of interest" description="Disordered" evidence="2">
    <location>
        <begin position="145"/>
        <end position="170"/>
    </location>
</feature>
<feature type="compositionally biased region" description="Polar residues" evidence="2">
    <location>
        <begin position="145"/>
        <end position="162"/>
    </location>
</feature>
<feature type="lipid moiety-binding region" description="GPI-anchor amidated serine" evidence="1">
    <location>
        <position position="218"/>
    </location>
</feature>
<feature type="glycosylation site" description="N-linked (GlcNAc...) asparagine" evidence="1">
    <location>
        <position position="30"/>
    </location>
</feature>
<feature type="glycosylation site" description="N-linked (GlcNAc...) asparagine" evidence="1">
    <location>
        <position position="67"/>
    </location>
</feature>
<feature type="glycosylation site" description="N-linked (GlcNAc...) asparagine" evidence="1">
    <location>
        <position position="103"/>
    </location>
</feature>
<feature type="glycosylation site" description="N-linked (GlcNAc...) asparagine" evidence="1">
    <location>
        <position position="136"/>
    </location>
</feature>
<feature type="splice variant" id="VSP_031770" description="In isoform 2." evidence="8">
    <original>VQPSASTPIPESSETSQTINTTPTVNTAKTTAKDTANTTAVTTANTTANTTAVTTAKTTAKSLAIRTLGSPLAGALHILLVFLISKLLF</original>
    <variation>GPLLARSGQLPHPSLQSAPLTLVNSARSVPAHSGPRIYLLLYISTL</variation>
    <location>
        <begin position="149"/>
        <end position="237"/>
    </location>
</feature>
<feature type="sequence conflict" description="In Ref. 2; BAB24118." evidence="9" ref="2">
    <original>V</original>
    <variation>G</variation>
    <location>
        <position position="189"/>
    </location>
</feature>
<keyword id="KW-0025">Alternative splicing</keyword>
<keyword id="KW-1003">Cell membrane</keyword>
<keyword id="KW-0221">Differentiation</keyword>
<keyword id="KW-0325">Glycoprotein</keyword>
<keyword id="KW-0336">GPI-anchor</keyword>
<keyword id="KW-0449">Lipoprotein</keyword>
<keyword id="KW-0472">Membrane</keyword>
<keyword id="KW-1185">Reference proteome</keyword>
<keyword id="KW-0732">Signal</keyword>
<organism>
    <name type="scientific">Mus musculus</name>
    <name type="common">Mouse</name>
    <dbReference type="NCBI Taxonomy" id="10090"/>
    <lineage>
        <taxon>Eukaryota</taxon>
        <taxon>Metazoa</taxon>
        <taxon>Chordata</taxon>
        <taxon>Craniata</taxon>
        <taxon>Vertebrata</taxon>
        <taxon>Euteleostomi</taxon>
        <taxon>Mammalia</taxon>
        <taxon>Eutheria</taxon>
        <taxon>Euarchontoglires</taxon>
        <taxon>Glires</taxon>
        <taxon>Rodentia</taxon>
        <taxon>Myomorpha</taxon>
        <taxon>Muroidea</taxon>
        <taxon>Muridae</taxon>
        <taxon>Murinae</taxon>
        <taxon>Mus</taxon>
        <taxon>Mus</taxon>
    </lineage>
</organism>
<evidence type="ECO:0000255" key="1"/>
<evidence type="ECO:0000256" key="2">
    <source>
        <dbReference type="SAM" id="MobiDB-lite"/>
    </source>
</evidence>
<evidence type="ECO:0000269" key="3">
    <source>
    </source>
</evidence>
<evidence type="ECO:0000269" key="4">
    <source>
    </source>
</evidence>
<evidence type="ECO:0000269" key="5">
    <source>
    </source>
</evidence>
<evidence type="ECO:0000269" key="6">
    <source>
    </source>
</evidence>
<evidence type="ECO:0000269" key="7">
    <source>
    </source>
</evidence>
<evidence type="ECO:0000303" key="8">
    <source>
    </source>
</evidence>
<evidence type="ECO:0000305" key="9"/>
<name>PLET1_MOUSE</name>
<accession>Q8VEN2</accession>
<accession>Q05DM2</accession>
<accession>Q9DAT1</accession>
<accession>Q9DCI0</accession>
<dbReference type="EMBL" id="AY364436">
    <property type="protein sequence ID" value="AAQ72439.1"/>
    <property type="molecule type" value="mRNA"/>
</dbReference>
<dbReference type="EMBL" id="AK002767">
    <property type="protein sequence ID" value="BAB22342.1"/>
    <property type="molecule type" value="mRNA"/>
</dbReference>
<dbReference type="EMBL" id="AK005558">
    <property type="protein sequence ID" value="BAB24118.1"/>
    <property type="status" value="ALT_FRAME"/>
    <property type="molecule type" value="mRNA"/>
</dbReference>
<dbReference type="EMBL" id="BC017624">
    <property type="protein sequence ID" value="AAH17624.1"/>
    <property type="molecule type" value="mRNA"/>
</dbReference>
<dbReference type="EMBL" id="BC022950">
    <property type="protein sequence ID" value="AAH22950.1"/>
    <property type="molecule type" value="mRNA"/>
</dbReference>
<dbReference type="CCDS" id="CCDS40619.1">
    <molecule id="Q8VEN2-1"/>
</dbReference>
<dbReference type="RefSeq" id="NP_083915.2">
    <molecule id="Q8VEN2-1"/>
    <property type="nucleotide sequence ID" value="NM_029639.2"/>
</dbReference>
<dbReference type="FunCoup" id="Q8VEN2">
    <property type="interactions" value="41"/>
</dbReference>
<dbReference type="STRING" id="10090.ENSMUSP00000110118"/>
<dbReference type="GlyCosmos" id="Q8VEN2">
    <property type="glycosylation" value="4 sites, No reported glycans"/>
</dbReference>
<dbReference type="GlyGen" id="Q8VEN2">
    <property type="glycosylation" value="4 sites"/>
</dbReference>
<dbReference type="PhosphoSitePlus" id="Q8VEN2"/>
<dbReference type="PaxDb" id="10090-ENSMUSP00000110118"/>
<dbReference type="PeptideAtlas" id="Q8VEN2"/>
<dbReference type="ProteomicsDB" id="289761">
    <molecule id="Q8VEN2-1"/>
</dbReference>
<dbReference type="ProteomicsDB" id="289762">
    <molecule id="Q8VEN2-2"/>
</dbReference>
<dbReference type="Antibodypedia" id="51858">
    <property type="antibodies" value="63 antibodies from 18 providers"/>
</dbReference>
<dbReference type="DNASU" id="76509"/>
<dbReference type="Ensembl" id="ENSMUST00000114474.8">
    <molecule id="Q8VEN2-1"/>
    <property type="protein sequence ID" value="ENSMUSP00000110118.2"/>
    <property type="gene ID" value="ENSMUSG00000032068.15"/>
</dbReference>
<dbReference type="Ensembl" id="ENSMUST00000188047.2">
    <molecule id="Q8VEN2-2"/>
    <property type="protein sequence ID" value="ENSMUSP00000139422.2"/>
    <property type="gene ID" value="ENSMUSG00000032068.15"/>
</dbReference>
<dbReference type="GeneID" id="76509"/>
<dbReference type="KEGG" id="mmu:76509"/>
<dbReference type="UCSC" id="uc009pjo.1">
    <molecule id="Q8VEN2-1"/>
    <property type="organism name" value="mouse"/>
</dbReference>
<dbReference type="AGR" id="MGI:1923759"/>
<dbReference type="CTD" id="349633"/>
<dbReference type="MGI" id="MGI:1923759">
    <property type="gene designation" value="Plet1"/>
</dbReference>
<dbReference type="VEuPathDB" id="HostDB:ENSMUSG00000032068"/>
<dbReference type="eggNOG" id="ENOG502RTZP">
    <property type="taxonomic scope" value="Eukaryota"/>
</dbReference>
<dbReference type="GeneTree" id="ENSGT00390000014690"/>
<dbReference type="HOGENOM" id="CLU_099483_0_0_1"/>
<dbReference type="InParanoid" id="Q8VEN2"/>
<dbReference type="OMA" id="TVWVPVN"/>
<dbReference type="OrthoDB" id="9446289at2759"/>
<dbReference type="PhylomeDB" id="Q8VEN2"/>
<dbReference type="TreeFam" id="TF344172"/>
<dbReference type="Reactome" id="R-MMU-163125">
    <property type="pathway name" value="Post-translational modification: synthesis of GPI-anchored proteins"/>
</dbReference>
<dbReference type="BioGRID-ORCS" id="76509">
    <property type="hits" value="0 hits in 77 CRISPR screens"/>
</dbReference>
<dbReference type="ChiTaRS" id="Plet1">
    <property type="organism name" value="mouse"/>
</dbReference>
<dbReference type="PRO" id="PR:Q8VEN2"/>
<dbReference type="Proteomes" id="UP000000589">
    <property type="component" value="Chromosome 9"/>
</dbReference>
<dbReference type="RNAct" id="Q8VEN2">
    <property type="molecule type" value="protein"/>
</dbReference>
<dbReference type="Bgee" id="ENSMUSG00000032068">
    <property type="expression patterns" value="Expressed in ectoplacental cone and 137 other cell types or tissues"/>
</dbReference>
<dbReference type="GO" id="GO:0016324">
    <property type="term" value="C:apical plasma membrane"/>
    <property type="evidence" value="ECO:0000314"/>
    <property type="project" value="UniProtKB"/>
</dbReference>
<dbReference type="GO" id="GO:0009897">
    <property type="term" value="C:external side of plasma membrane"/>
    <property type="evidence" value="ECO:0000314"/>
    <property type="project" value="MGI"/>
</dbReference>
<dbReference type="GO" id="GO:0030154">
    <property type="term" value="P:cell differentiation"/>
    <property type="evidence" value="ECO:0007669"/>
    <property type="project" value="UniProtKB-KW"/>
</dbReference>
<dbReference type="GO" id="GO:0001953">
    <property type="term" value="P:negative regulation of cell-matrix adhesion"/>
    <property type="evidence" value="ECO:0000315"/>
    <property type="project" value="UniProtKB"/>
</dbReference>
<dbReference type="GO" id="GO:0030335">
    <property type="term" value="P:positive regulation of cell migration"/>
    <property type="evidence" value="ECO:0000315"/>
    <property type="project" value="UniProtKB"/>
</dbReference>
<dbReference type="GO" id="GO:0035313">
    <property type="term" value="P:wound healing, spreading of epidermal cells"/>
    <property type="evidence" value="ECO:0000315"/>
    <property type="project" value="UniProtKB"/>
</dbReference>
<dbReference type="InterPro" id="IPR026184">
    <property type="entry name" value="PLET1"/>
</dbReference>
<dbReference type="PANTHER" id="PTHR22527">
    <property type="entry name" value="PLACENTA-EXPRESSED TRANSCRIPT 1 PROTEIN"/>
    <property type="match status" value="1"/>
</dbReference>
<dbReference type="PANTHER" id="PTHR22527:SF2">
    <property type="entry name" value="PLACENTA-EXPRESSED TRANSCRIPT 1 PROTEIN"/>
    <property type="match status" value="1"/>
</dbReference>
<sequence>MLSLRSLLPHLGLFLCLALHLSPSLSASDNGSCVVLDNIYTSDILEISTMANVSGGDVTYTVTVPVNDSVSAVILKAVKEDDSPVGTWSGTYEKCNDSSVYYNLTSQSQSVFQTNWTVPTSEDVTKVNLQVLIVVNRTASKSSVKMEQVQPSASTPIPESSETSQTINTTPTVNTAKTTAKDTANTTAVTTANTTANTTAVTTAKTTAKSLAIRTLGSPLAGALHILLVFLISKLLF</sequence>
<comment type="function">
    <text evidence="7">Modulates leading keratinocyte migration and cellular adhesion to matrix proteins during a wound-healing response and promotes wound repair. May play a role during trichilemmal differentiation of the hair follicle.</text>
</comment>
<comment type="subcellular location">
    <subcellularLocation>
        <location evidence="7">Apical cell membrane</location>
        <topology evidence="7">Lipid-anchor</topology>
        <topology evidence="7">GPI-anchor</topology>
    </subcellularLocation>
    <text>Localized at the apical membrane of the most differentiated keratinocytes of the outer root sheath (ORS), clustered mainly in planar regions of the plasma membrane at the base of microvilli.</text>
</comment>
<comment type="alternative products">
    <event type="alternative splicing"/>
    <isoform>
        <id>Q8VEN2-1</id>
        <name>1</name>
        <sequence type="displayed"/>
    </isoform>
    <isoform>
        <id>Q8VEN2-2</id>
        <name>2</name>
        <sequence type="described" ref="VSP_031770"/>
    </isoform>
</comment>
<comment type="tissue specificity">
    <text evidence="3 4 6 7">Present in hair follicle cells and sebaceous gland of skin, ciliated epithelial cells of trachea and bronchial tube, striated portion of submandibular gland, distal convoluted tubule cells of kidney, ciliated epithelial cells of oviduct, medulla of adrenal gland and anterior lobe of pituitary gland. Expressed in keratinocytes of the hair follicle at the trichilemmal zone corresponding to the terminally differentiated outermost suprabasal outer root sheath (ORS), including that of the sebaceous gland duct (SGD) and the directly adjacent upper distal end of the companion layer (CL). Expression is similar in all hair follicle growth stages. Also detected during both the early and late anagen phases above the bulge of stem cells. Expressed at the leading edge of the epidermal wound. Not expressed in the interfollicular epidermis (IFE), inner root sheath (IRS) and hair fiber. Highly expressed in placenta. Detected in mammary and prostate epithelia and in the pancreas (at protein level).</text>
</comment>
<comment type="developmental stage">
    <text evidence="5 6">In early embryos before gastrulation, it is specifically expressed in the distal-most part of the extraembryonic ectoderm, adjacent to the epiblast. Expression is highly restricted to the developing pharyngeal endoderm and mesonephros until day 11.5 of embryogenesis.</text>
</comment>
<comment type="induction">
    <text evidence="7">Up-regulated during calcium-induced terminal differentiation of outer root sheath (ORS) keratinocytes.</text>
</comment>
<comment type="PTM">
    <text evidence="7">N-glycosylated.</text>
</comment>
<comment type="PTM">
    <text>GPI-anchored.</text>
</comment>
<comment type="sequence caution" evidence="9">
    <conflict type="frameshift">
        <sequence resource="EMBL-CDS" id="BAB24118"/>
    </conflict>
</comment>
<proteinExistence type="evidence at protein level"/>
<gene>
    <name type="primary">Plet1</name>
</gene>
<protein>
    <recommendedName>
        <fullName>Placenta-expressed transcript 1 protein</fullName>
    </recommendedName>
    <alternativeName>
        <fullName>Antigen mAgK114</fullName>
    </alternativeName>
</protein>